<sequence>MNWLNNVVRPKIRSILKRETPENLWIKCPDSGQLVFYKDVEANQFVIPGSNYHMRMGATARLKSIFDNETWFDVALPDVAADPLKFRDERRYADRIKDARAKTGMNDAVKVGYGRIESTPAVVAVQDFDFMGGSLGMAAGEAIVTGLQLAVEKHAPFIMFAASGGARMQEGILSLMQMPRTTVAIQLLREAGLPYIVVLTNPTTGGVTASYAMLGDVQLAEPGALIGFAGARVIEQTIREKLPEGFQRAEYLKEHGMVDMVVHRHEMRPTLARLCRLLMKVPAPHADEVAAPPPPDVEGPPPAAEPVALPPA</sequence>
<evidence type="ECO:0000255" key="1">
    <source>
        <dbReference type="HAMAP-Rule" id="MF_01395"/>
    </source>
</evidence>
<evidence type="ECO:0000255" key="2">
    <source>
        <dbReference type="PROSITE-ProRule" id="PRU01136"/>
    </source>
</evidence>
<evidence type="ECO:0000256" key="3">
    <source>
        <dbReference type="SAM" id="MobiDB-lite"/>
    </source>
</evidence>
<evidence type="ECO:0000305" key="4"/>
<proteinExistence type="inferred from homology"/>
<dbReference type="EC" id="2.1.3.15" evidence="1"/>
<dbReference type="EMBL" id="CP001196">
    <property type="protein sequence ID" value="ACI91624.1"/>
    <property type="molecule type" value="Genomic_DNA"/>
</dbReference>
<dbReference type="EMBL" id="CP002826">
    <property type="protein sequence ID" value="AEI04789.1"/>
    <property type="status" value="ALT_INIT"/>
    <property type="molecule type" value="Genomic_DNA"/>
</dbReference>
<dbReference type="RefSeq" id="WP_012561655.1">
    <property type="nucleotide sequence ID" value="NC_015684.1"/>
</dbReference>
<dbReference type="SMR" id="B6JCP4"/>
<dbReference type="STRING" id="504832.OCA5_c00550"/>
<dbReference type="KEGG" id="oca:OCAR_4479"/>
<dbReference type="KEGG" id="ocg:OCA5_c00550"/>
<dbReference type="PATRIC" id="fig|504832.7.peg.58"/>
<dbReference type="eggNOG" id="COG0777">
    <property type="taxonomic scope" value="Bacteria"/>
</dbReference>
<dbReference type="HOGENOM" id="CLU_015486_1_0_5"/>
<dbReference type="OrthoDB" id="9772975at2"/>
<dbReference type="UniPathway" id="UPA00655">
    <property type="reaction ID" value="UER00711"/>
</dbReference>
<dbReference type="Proteomes" id="UP000007730">
    <property type="component" value="Chromosome"/>
</dbReference>
<dbReference type="GO" id="GO:0009329">
    <property type="term" value="C:acetate CoA-transferase complex"/>
    <property type="evidence" value="ECO:0007669"/>
    <property type="project" value="TreeGrafter"/>
</dbReference>
<dbReference type="GO" id="GO:0003989">
    <property type="term" value="F:acetyl-CoA carboxylase activity"/>
    <property type="evidence" value="ECO:0007669"/>
    <property type="project" value="InterPro"/>
</dbReference>
<dbReference type="GO" id="GO:0005524">
    <property type="term" value="F:ATP binding"/>
    <property type="evidence" value="ECO:0007669"/>
    <property type="project" value="UniProtKB-KW"/>
</dbReference>
<dbReference type="GO" id="GO:0016743">
    <property type="term" value="F:carboxyl- or carbamoyltransferase activity"/>
    <property type="evidence" value="ECO:0007669"/>
    <property type="project" value="UniProtKB-UniRule"/>
</dbReference>
<dbReference type="GO" id="GO:0006633">
    <property type="term" value="P:fatty acid biosynthetic process"/>
    <property type="evidence" value="ECO:0007669"/>
    <property type="project" value="UniProtKB-KW"/>
</dbReference>
<dbReference type="GO" id="GO:2001295">
    <property type="term" value="P:malonyl-CoA biosynthetic process"/>
    <property type="evidence" value="ECO:0007669"/>
    <property type="project" value="UniProtKB-UniRule"/>
</dbReference>
<dbReference type="Gene3D" id="3.90.226.10">
    <property type="entry name" value="2-enoyl-CoA Hydratase, Chain A, domain 1"/>
    <property type="match status" value="1"/>
</dbReference>
<dbReference type="HAMAP" id="MF_01395">
    <property type="entry name" value="AcetylCoA_CT_beta"/>
    <property type="match status" value="1"/>
</dbReference>
<dbReference type="InterPro" id="IPR034733">
    <property type="entry name" value="AcCoA_carboxyl_beta"/>
</dbReference>
<dbReference type="InterPro" id="IPR000438">
    <property type="entry name" value="Acetyl_CoA_COase_Trfase_b_su"/>
</dbReference>
<dbReference type="InterPro" id="IPR029045">
    <property type="entry name" value="ClpP/crotonase-like_dom_sf"/>
</dbReference>
<dbReference type="InterPro" id="IPR011762">
    <property type="entry name" value="COA_CT_N"/>
</dbReference>
<dbReference type="NCBIfam" id="TIGR00515">
    <property type="entry name" value="accD"/>
    <property type="match status" value="1"/>
</dbReference>
<dbReference type="PANTHER" id="PTHR42995">
    <property type="entry name" value="ACETYL-COENZYME A CARBOXYLASE CARBOXYL TRANSFERASE SUBUNIT BETA, CHLOROPLASTIC"/>
    <property type="match status" value="1"/>
</dbReference>
<dbReference type="PANTHER" id="PTHR42995:SF5">
    <property type="entry name" value="ACETYL-COENZYME A CARBOXYLASE CARBOXYL TRANSFERASE SUBUNIT BETA, CHLOROPLASTIC"/>
    <property type="match status" value="1"/>
</dbReference>
<dbReference type="Pfam" id="PF01039">
    <property type="entry name" value="Carboxyl_trans"/>
    <property type="match status" value="1"/>
</dbReference>
<dbReference type="PRINTS" id="PR01070">
    <property type="entry name" value="ACCCTRFRASEB"/>
</dbReference>
<dbReference type="SUPFAM" id="SSF52096">
    <property type="entry name" value="ClpP/crotonase"/>
    <property type="match status" value="1"/>
</dbReference>
<dbReference type="PROSITE" id="PS50980">
    <property type="entry name" value="COA_CT_NTER"/>
    <property type="match status" value="1"/>
</dbReference>
<feature type="chain" id="PRO_0000389808" description="Acetyl-coenzyme A carboxylase carboxyl transferase subunit beta">
    <location>
        <begin position="1"/>
        <end position="312"/>
    </location>
</feature>
<feature type="domain" description="CoA carboxyltransferase N-terminal" evidence="2">
    <location>
        <begin position="24"/>
        <end position="293"/>
    </location>
</feature>
<feature type="region of interest" description="Disordered" evidence="3">
    <location>
        <begin position="286"/>
        <end position="312"/>
    </location>
</feature>
<feature type="compositionally biased region" description="Pro residues" evidence="3">
    <location>
        <begin position="291"/>
        <end position="312"/>
    </location>
</feature>
<keyword id="KW-0067">ATP-binding</keyword>
<keyword id="KW-0963">Cytoplasm</keyword>
<keyword id="KW-0275">Fatty acid biosynthesis</keyword>
<keyword id="KW-0276">Fatty acid metabolism</keyword>
<keyword id="KW-0444">Lipid biosynthesis</keyword>
<keyword id="KW-0443">Lipid metabolism</keyword>
<keyword id="KW-0547">Nucleotide-binding</keyword>
<keyword id="KW-1185">Reference proteome</keyword>
<keyword id="KW-0808">Transferase</keyword>
<organism>
    <name type="scientific">Afipia carboxidovorans (strain ATCC 49405 / DSM 1227 / KCTC 32145 / OM5)</name>
    <name type="common">Oligotropha carboxidovorans</name>
    <dbReference type="NCBI Taxonomy" id="504832"/>
    <lineage>
        <taxon>Bacteria</taxon>
        <taxon>Pseudomonadati</taxon>
        <taxon>Pseudomonadota</taxon>
        <taxon>Alphaproteobacteria</taxon>
        <taxon>Hyphomicrobiales</taxon>
        <taxon>Nitrobacteraceae</taxon>
        <taxon>Afipia</taxon>
    </lineage>
</organism>
<gene>
    <name evidence="1" type="primary">accD</name>
    <name type="ordered locus">OCAR_4479</name>
    <name type="ordered locus">OCA5_c00550</name>
</gene>
<name>ACCD_AFIC5</name>
<protein>
    <recommendedName>
        <fullName evidence="1">Acetyl-coenzyme A carboxylase carboxyl transferase subunit beta</fullName>
        <shortName evidence="1">ACCase subunit beta</shortName>
        <shortName evidence="1">Acetyl-CoA carboxylase carboxyltransferase subunit beta</shortName>
        <ecNumber evidence="1">2.1.3.15</ecNumber>
    </recommendedName>
</protein>
<reference key="1">
    <citation type="journal article" date="2008" name="J. Bacteriol.">
        <title>Genome sequence of the chemolithoautotrophic bacterium Oligotropha carboxidovorans OM5T.</title>
        <authorList>
            <person name="Paul D."/>
            <person name="Bridges S."/>
            <person name="Burgess S.C."/>
            <person name="Dandass Y."/>
            <person name="Lawrence M.L."/>
        </authorList>
    </citation>
    <scope>NUCLEOTIDE SEQUENCE [LARGE SCALE GENOMIC DNA]</scope>
    <source>
        <strain>ATCC 49405 / DSM 1227 / KCTC 32145 / OM5</strain>
    </source>
</reference>
<reference key="2">
    <citation type="journal article" date="2011" name="J. Bacteriol.">
        <title>Complete genome sequences of the chemolithoautotrophic Oligotropha carboxidovorans strains OM4 and OM5.</title>
        <authorList>
            <person name="Volland S."/>
            <person name="Rachinger M."/>
            <person name="Strittmatter A."/>
            <person name="Daniel R."/>
            <person name="Gottschalk G."/>
            <person name="Meyer O."/>
        </authorList>
    </citation>
    <scope>NUCLEOTIDE SEQUENCE [LARGE SCALE GENOMIC DNA]</scope>
    <source>
        <strain>ATCC 49405 / DSM 1227 / KCTC 32145 / OM5</strain>
    </source>
</reference>
<accession>B6JCP4</accession>
<accession>F8C090</accession>
<comment type="function">
    <text evidence="1">Component of the acetyl coenzyme A carboxylase (ACC) complex. Biotin carboxylase (BC) catalyzes the carboxylation of biotin on its carrier protein (BCCP) and then the CO(2) group is transferred by the transcarboxylase to acetyl-CoA to form malonyl-CoA.</text>
</comment>
<comment type="catalytic activity">
    <reaction evidence="1">
        <text>N(6)-carboxybiotinyl-L-lysyl-[protein] + acetyl-CoA = N(6)-biotinyl-L-lysyl-[protein] + malonyl-CoA</text>
        <dbReference type="Rhea" id="RHEA:54728"/>
        <dbReference type="Rhea" id="RHEA-COMP:10505"/>
        <dbReference type="Rhea" id="RHEA-COMP:10506"/>
        <dbReference type="ChEBI" id="CHEBI:57288"/>
        <dbReference type="ChEBI" id="CHEBI:57384"/>
        <dbReference type="ChEBI" id="CHEBI:83144"/>
        <dbReference type="ChEBI" id="CHEBI:83145"/>
        <dbReference type="EC" id="2.1.3.15"/>
    </reaction>
</comment>
<comment type="pathway">
    <text evidence="1">Lipid metabolism; malonyl-CoA biosynthesis; malonyl-CoA from acetyl-CoA: step 1/1.</text>
</comment>
<comment type="subunit">
    <text evidence="1">Acetyl-CoA carboxylase is a heterohexamer composed of biotin carboxyl carrier protein (AccB), biotin carboxylase (AccC) and two subunits each of ACCase subunit alpha (AccA) and ACCase subunit beta (AccD).</text>
</comment>
<comment type="subcellular location">
    <subcellularLocation>
        <location evidence="1">Cytoplasm</location>
    </subcellularLocation>
</comment>
<comment type="similarity">
    <text evidence="1">Belongs to the AccD/PCCB family.</text>
</comment>
<comment type="sequence caution" evidence="4">
    <conflict type="erroneous initiation">
        <sequence resource="EMBL-CDS" id="AEI04789"/>
    </conflict>
    <text>Extended N-terminus.</text>
</comment>